<comment type="function">
    <text evidence="1">Catalyzes the methylthiolation of an aspartic acid residue of ribosomal protein uS12.</text>
</comment>
<comment type="catalytic activity">
    <reaction evidence="1">
        <text>L-aspartate(89)-[ribosomal protein uS12]-hydrogen + (sulfur carrier)-SH + AH2 + 2 S-adenosyl-L-methionine = 3-methylsulfanyl-L-aspartate(89)-[ribosomal protein uS12]-hydrogen + (sulfur carrier)-H + 5'-deoxyadenosine + L-methionine + A + S-adenosyl-L-homocysteine + 2 H(+)</text>
        <dbReference type="Rhea" id="RHEA:37087"/>
        <dbReference type="Rhea" id="RHEA-COMP:10460"/>
        <dbReference type="Rhea" id="RHEA-COMP:10461"/>
        <dbReference type="Rhea" id="RHEA-COMP:14737"/>
        <dbReference type="Rhea" id="RHEA-COMP:14739"/>
        <dbReference type="ChEBI" id="CHEBI:13193"/>
        <dbReference type="ChEBI" id="CHEBI:15378"/>
        <dbReference type="ChEBI" id="CHEBI:17319"/>
        <dbReference type="ChEBI" id="CHEBI:17499"/>
        <dbReference type="ChEBI" id="CHEBI:29917"/>
        <dbReference type="ChEBI" id="CHEBI:29961"/>
        <dbReference type="ChEBI" id="CHEBI:57844"/>
        <dbReference type="ChEBI" id="CHEBI:57856"/>
        <dbReference type="ChEBI" id="CHEBI:59789"/>
        <dbReference type="ChEBI" id="CHEBI:64428"/>
        <dbReference type="ChEBI" id="CHEBI:73599"/>
        <dbReference type="EC" id="2.8.4.4"/>
    </reaction>
</comment>
<comment type="cofactor">
    <cofactor evidence="1">
        <name>[4Fe-4S] cluster</name>
        <dbReference type="ChEBI" id="CHEBI:49883"/>
    </cofactor>
    <text evidence="1">Binds 2 [4Fe-4S] clusters. One cluster is coordinated with 3 cysteines and an exchangeable S-adenosyl-L-methionine.</text>
</comment>
<comment type="subcellular location">
    <subcellularLocation>
        <location evidence="1">Cytoplasm</location>
    </subcellularLocation>
</comment>
<comment type="similarity">
    <text evidence="1">Belongs to the methylthiotransferase family. RimO subfamily.</text>
</comment>
<name>RIMO_SYNR3</name>
<evidence type="ECO:0000255" key="1">
    <source>
        <dbReference type="HAMAP-Rule" id="MF_01865"/>
    </source>
</evidence>
<evidence type="ECO:0000255" key="2">
    <source>
        <dbReference type="PROSITE-ProRule" id="PRU01266"/>
    </source>
</evidence>
<sequence>MPAGHGQTAMTREQQPPRFTLNCWADAAMASTATTARPTVAFAHLGCEKNRVDTEHMLGLLAQAGYGVSADEADAQVVVVNTCSFIQDARAESVRTLVDLAEQGKQIVIAGCLAQHFQEELLESLPEARAIVGTGDYQHIVEVLEQVEAGERVNRVSQVPTFVADENLPRYRTTSEAVAYLKVAEGCDYRCAFCIIPKLRGDQRSRPIESIVAEAQQLAAQGVKELILISQITTNYGLDLYGKPQLAELLRALGEVEIPWIRVHYAYPTGLTPEVLAAYREVPNVLPYLDLPLQHSHPEVLRAMNRPWQEGVNGQLLQRIREQLPDAVLRTTFIVGYPGETEEQFEHLLEFVQEQRFDHVGVFCFSPEDGTPAADLPNAVPAEVAEARRGRLMEAQQAISAERNGAWVGRIVDVLVEQENPSSGELIGRCLRFAPDVDGEVRIRAGSHGAAASAGTMVPVRITAADIYDLEGEVVGAQEMVDAVRHS</sequence>
<protein>
    <recommendedName>
        <fullName evidence="1">Ribosomal protein uS12 methylthiotransferase RimO</fullName>
        <shortName evidence="1">uS12 MTTase</shortName>
        <shortName evidence="1">uS12 methylthiotransferase</shortName>
        <ecNumber evidence="1">2.8.4.4</ecNumber>
    </recommendedName>
    <alternativeName>
        <fullName evidence="1">Ribosomal protein uS12 (aspartate-C(3))-methylthiotransferase</fullName>
    </alternativeName>
    <alternativeName>
        <fullName evidence="1">Ribosome maturation factor RimO</fullName>
    </alternativeName>
</protein>
<feature type="chain" id="PRO_0000375037" description="Ribosomal protein uS12 methylthiotransferase RimO">
    <location>
        <begin position="1"/>
        <end position="487"/>
    </location>
</feature>
<feature type="domain" description="MTTase N-terminal" evidence="1">
    <location>
        <begin position="38"/>
        <end position="149"/>
    </location>
</feature>
<feature type="domain" description="Radical SAM core" evidence="2">
    <location>
        <begin position="173"/>
        <end position="402"/>
    </location>
</feature>
<feature type="domain" description="TRAM" evidence="1">
    <location>
        <begin position="405"/>
        <end position="476"/>
    </location>
</feature>
<feature type="binding site" evidence="1">
    <location>
        <position position="47"/>
    </location>
    <ligand>
        <name>[4Fe-4S] cluster</name>
        <dbReference type="ChEBI" id="CHEBI:49883"/>
        <label>1</label>
    </ligand>
</feature>
<feature type="binding site" evidence="1">
    <location>
        <position position="83"/>
    </location>
    <ligand>
        <name>[4Fe-4S] cluster</name>
        <dbReference type="ChEBI" id="CHEBI:49883"/>
        <label>1</label>
    </ligand>
</feature>
<feature type="binding site" evidence="1">
    <location>
        <position position="112"/>
    </location>
    <ligand>
        <name>[4Fe-4S] cluster</name>
        <dbReference type="ChEBI" id="CHEBI:49883"/>
        <label>1</label>
    </ligand>
</feature>
<feature type="binding site" evidence="1">
    <location>
        <position position="187"/>
    </location>
    <ligand>
        <name>[4Fe-4S] cluster</name>
        <dbReference type="ChEBI" id="CHEBI:49883"/>
        <label>2</label>
        <note>4Fe-4S-S-AdoMet</note>
    </ligand>
</feature>
<feature type="binding site" evidence="1">
    <location>
        <position position="191"/>
    </location>
    <ligand>
        <name>[4Fe-4S] cluster</name>
        <dbReference type="ChEBI" id="CHEBI:49883"/>
        <label>2</label>
        <note>4Fe-4S-S-AdoMet</note>
    </ligand>
</feature>
<feature type="binding site" evidence="1">
    <location>
        <position position="194"/>
    </location>
    <ligand>
        <name>[4Fe-4S] cluster</name>
        <dbReference type="ChEBI" id="CHEBI:49883"/>
        <label>2</label>
        <note>4Fe-4S-S-AdoMet</note>
    </ligand>
</feature>
<proteinExistence type="inferred from homology"/>
<reference key="1">
    <citation type="submission" date="2006-05" db="EMBL/GenBank/DDBJ databases">
        <authorList>
            <consortium name="Genoscope"/>
        </authorList>
    </citation>
    <scope>NUCLEOTIDE SEQUENCE [LARGE SCALE GENOMIC DNA]</scope>
    <source>
        <strain>RCC307</strain>
    </source>
</reference>
<accession>A5GQP4</accession>
<dbReference type="EC" id="2.8.4.4" evidence="1"/>
<dbReference type="EMBL" id="CT978603">
    <property type="protein sequence ID" value="CAK27203.1"/>
    <property type="molecule type" value="Genomic_DNA"/>
</dbReference>
<dbReference type="SMR" id="A5GQP4"/>
<dbReference type="STRING" id="316278.SynRCC307_0300"/>
<dbReference type="KEGG" id="syr:SynRCC307_0300"/>
<dbReference type="eggNOG" id="COG0621">
    <property type="taxonomic scope" value="Bacteria"/>
</dbReference>
<dbReference type="HOGENOM" id="CLU_018697_0_1_3"/>
<dbReference type="Proteomes" id="UP000001115">
    <property type="component" value="Chromosome"/>
</dbReference>
<dbReference type="GO" id="GO:0005829">
    <property type="term" value="C:cytosol"/>
    <property type="evidence" value="ECO:0007669"/>
    <property type="project" value="TreeGrafter"/>
</dbReference>
<dbReference type="GO" id="GO:0051539">
    <property type="term" value="F:4 iron, 4 sulfur cluster binding"/>
    <property type="evidence" value="ECO:0007669"/>
    <property type="project" value="UniProtKB-UniRule"/>
</dbReference>
<dbReference type="GO" id="GO:0035599">
    <property type="term" value="F:aspartic acid methylthiotransferase activity"/>
    <property type="evidence" value="ECO:0007669"/>
    <property type="project" value="TreeGrafter"/>
</dbReference>
<dbReference type="GO" id="GO:0046872">
    <property type="term" value="F:metal ion binding"/>
    <property type="evidence" value="ECO:0007669"/>
    <property type="project" value="UniProtKB-KW"/>
</dbReference>
<dbReference type="GO" id="GO:0103039">
    <property type="term" value="F:protein methylthiotransferase activity"/>
    <property type="evidence" value="ECO:0007669"/>
    <property type="project" value="UniProtKB-EC"/>
</dbReference>
<dbReference type="GO" id="GO:0006400">
    <property type="term" value="P:tRNA modification"/>
    <property type="evidence" value="ECO:0007669"/>
    <property type="project" value="InterPro"/>
</dbReference>
<dbReference type="CDD" id="cd01335">
    <property type="entry name" value="Radical_SAM"/>
    <property type="match status" value="1"/>
</dbReference>
<dbReference type="FunFam" id="3.80.30.20:FF:000001">
    <property type="entry name" value="tRNA-2-methylthio-N(6)-dimethylallyladenosine synthase 2"/>
    <property type="match status" value="1"/>
</dbReference>
<dbReference type="Gene3D" id="3.40.50.12160">
    <property type="entry name" value="Methylthiotransferase, N-terminal domain"/>
    <property type="match status" value="1"/>
</dbReference>
<dbReference type="Gene3D" id="2.40.50.140">
    <property type="entry name" value="Nucleic acid-binding proteins"/>
    <property type="match status" value="1"/>
</dbReference>
<dbReference type="Gene3D" id="3.80.30.20">
    <property type="entry name" value="tm_1862 like domain"/>
    <property type="match status" value="1"/>
</dbReference>
<dbReference type="HAMAP" id="MF_01865">
    <property type="entry name" value="MTTase_RimO"/>
    <property type="match status" value="1"/>
</dbReference>
<dbReference type="InterPro" id="IPR006638">
    <property type="entry name" value="Elp3/MiaA/NifB-like_rSAM"/>
</dbReference>
<dbReference type="InterPro" id="IPR005839">
    <property type="entry name" value="Methylthiotransferase"/>
</dbReference>
<dbReference type="InterPro" id="IPR020612">
    <property type="entry name" value="Methylthiotransferase_CS"/>
</dbReference>
<dbReference type="InterPro" id="IPR013848">
    <property type="entry name" value="Methylthiotransferase_N"/>
</dbReference>
<dbReference type="InterPro" id="IPR038135">
    <property type="entry name" value="Methylthiotransferase_N_sf"/>
</dbReference>
<dbReference type="InterPro" id="IPR012340">
    <property type="entry name" value="NA-bd_OB-fold"/>
</dbReference>
<dbReference type="InterPro" id="IPR005840">
    <property type="entry name" value="Ribosomal_uS12_MeSTrfase_RimO"/>
</dbReference>
<dbReference type="InterPro" id="IPR007197">
    <property type="entry name" value="rSAM"/>
</dbReference>
<dbReference type="InterPro" id="IPR023404">
    <property type="entry name" value="rSAM_horseshoe"/>
</dbReference>
<dbReference type="InterPro" id="IPR002792">
    <property type="entry name" value="TRAM_dom"/>
</dbReference>
<dbReference type="NCBIfam" id="TIGR01125">
    <property type="entry name" value="30S ribosomal protein S12 methylthiotransferase RimO"/>
    <property type="match status" value="1"/>
</dbReference>
<dbReference type="NCBIfam" id="TIGR00089">
    <property type="entry name" value="MiaB/RimO family radical SAM methylthiotransferase"/>
    <property type="match status" value="1"/>
</dbReference>
<dbReference type="PANTHER" id="PTHR43837">
    <property type="entry name" value="RIBOSOMAL PROTEIN S12 METHYLTHIOTRANSFERASE RIMO"/>
    <property type="match status" value="1"/>
</dbReference>
<dbReference type="PANTHER" id="PTHR43837:SF1">
    <property type="entry name" value="RIBOSOMAL PROTEIN US12 METHYLTHIOTRANSFERASE RIMO"/>
    <property type="match status" value="1"/>
</dbReference>
<dbReference type="Pfam" id="PF04055">
    <property type="entry name" value="Radical_SAM"/>
    <property type="match status" value="1"/>
</dbReference>
<dbReference type="Pfam" id="PF18693">
    <property type="entry name" value="TRAM_2"/>
    <property type="match status" value="1"/>
</dbReference>
<dbReference type="Pfam" id="PF00919">
    <property type="entry name" value="UPF0004"/>
    <property type="match status" value="1"/>
</dbReference>
<dbReference type="SFLD" id="SFLDG01082">
    <property type="entry name" value="B12-binding_domain_containing"/>
    <property type="match status" value="1"/>
</dbReference>
<dbReference type="SFLD" id="SFLDG01061">
    <property type="entry name" value="methylthiotransferase"/>
    <property type="match status" value="1"/>
</dbReference>
<dbReference type="SFLD" id="SFLDF00274">
    <property type="entry name" value="ribosomal_protein_S12_methylth"/>
    <property type="match status" value="1"/>
</dbReference>
<dbReference type="SMART" id="SM00729">
    <property type="entry name" value="Elp3"/>
    <property type="match status" value="1"/>
</dbReference>
<dbReference type="SUPFAM" id="SSF102114">
    <property type="entry name" value="Radical SAM enzymes"/>
    <property type="match status" value="1"/>
</dbReference>
<dbReference type="PROSITE" id="PS51449">
    <property type="entry name" value="MTTASE_N"/>
    <property type="match status" value="1"/>
</dbReference>
<dbReference type="PROSITE" id="PS01278">
    <property type="entry name" value="MTTASE_RADICAL"/>
    <property type="match status" value="1"/>
</dbReference>
<dbReference type="PROSITE" id="PS51918">
    <property type="entry name" value="RADICAL_SAM"/>
    <property type="match status" value="1"/>
</dbReference>
<dbReference type="PROSITE" id="PS50926">
    <property type="entry name" value="TRAM"/>
    <property type="match status" value="1"/>
</dbReference>
<organism>
    <name type="scientific">Synechococcus sp. (strain RCC307)</name>
    <dbReference type="NCBI Taxonomy" id="316278"/>
    <lineage>
        <taxon>Bacteria</taxon>
        <taxon>Bacillati</taxon>
        <taxon>Cyanobacteriota</taxon>
        <taxon>Cyanophyceae</taxon>
        <taxon>Synechococcales</taxon>
        <taxon>Synechococcaceae</taxon>
        <taxon>Synechococcus</taxon>
    </lineage>
</organism>
<keyword id="KW-0004">4Fe-4S</keyword>
<keyword id="KW-0963">Cytoplasm</keyword>
<keyword id="KW-0408">Iron</keyword>
<keyword id="KW-0411">Iron-sulfur</keyword>
<keyword id="KW-0479">Metal-binding</keyword>
<keyword id="KW-1185">Reference proteome</keyword>
<keyword id="KW-0949">S-adenosyl-L-methionine</keyword>
<keyword id="KW-0808">Transferase</keyword>
<gene>
    <name evidence="1" type="primary">rimO</name>
    <name type="ordered locus">SynRCC307_0300</name>
</gene>